<name>SODC2_MESCR</name>
<feature type="chain" id="PRO_0000164145" description="Superoxide dismutase [Cu-Zn] 2">
    <location>
        <begin position="1"/>
        <end position="156"/>
    </location>
</feature>
<feature type="binding site" evidence="1">
    <location>
        <position position="47"/>
    </location>
    <ligand>
        <name>Cu cation</name>
        <dbReference type="ChEBI" id="CHEBI:23378"/>
        <note>catalytic</note>
    </ligand>
</feature>
<feature type="binding site" evidence="1">
    <location>
        <position position="49"/>
    </location>
    <ligand>
        <name>Cu cation</name>
        <dbReference type="ChEBI" id="CHEBI:23378"/>
        <note>catalytic</note>
    </ligand>
</feature>
<feature type="binding site" evidence="1">
    <location>
        <position position="64"/>
    </location>
    <ligand>
        <name>Cu cation</name>
        <dbReference type="ChEBI" id="CHEBI:23378"/>
        <note>catalytic</note>
    </ligand>
</feature>
<feature type="binding site" evidence="1">
    <location>
        <position position="64"/>
    </location>
    <ligand>
        <name>Zn(2+)</name>
        <dbReference type="ChEBI" id="CHEBI:29105"/>
        <note>structural</note>
    </ligand>
</feature>
<feature type="binding site" evidence="1">
    <location>
        <position position="72"/>
    </location>
    <ligand>
        <name>Zn(2+)</name>
        <dbReference type="ChEBI" id="CHEBI:29105"/>
        <note>structural</note>
    </ligand>
</feature>
<feature type="binding site" evidence="1">
    <location>
        <position position="81"/>
    </location>
    <ligand>
        <name>Zn(2+)</name>
        <dbReference type="ChEBI" id="CHEBI:29105"/>
        <note>structural</note>
    </ligand>
</feature>
<feature type="binding site" evidence="1">
    <location>
        <position position="84"/>
    </location>
    <ligand>
        <name>Zn(2+)</name>
        <dbReference type="ChEBI" id="CHEBI:29105"/>
        <note>structural</note>
    </ligand>
</feature>
<feature type="binding site" evidence="1">
    <location>
        <position position="121"/>
    </location>
    <ligand>
        <name>Cu cation</name>
        <dbReference type="ChEBI" id="CHEBI:23378"/>
        <note>catalytic</note>
    </ligand>
</feature>
<feature type="disulfide bond" evidence="1">
    <location>
        <begin position="58"/>
        <end position="147"/>
    </location>
</feature>
<keyword id="KW-0049">Antioxidant</keyword>
<keyword id="KW-0186">Copper</keyword>
<keyword id="KW-0963">Cytoplasm</keyword>
<keyword id="KW-1015">Disulfide bond</keyword>
<keyword id="KW-0479">Metal-binding</keyword>
<keyword id="KW-0560">Oxidoreductase</keyword>
<keyword id="KW-0862">Zinc</keyword>
<proteinExistence type="evidence at transcript level"/>
<dbReference type="EC" id="1.15.1.1"/>
<dbReference type="EMBL" id="AF034832">
    <property type="protein sequence ID" value="AAC04614.1"/>
    <property type="molecule type" value="mRNA"/>
</dbReference>
<dbReference type="PIR" id="T12204">
    <property type="entry name" value="T12204"/>
</dbReference>
<dbReference type="SMR" id="O49044"/>
<dbReference type="GO" id="GO:0005737">
    <property type="term" value="C:cytoplasm"/>
    <property type="evidence" value="ECO:0007669"/>
    <property type="project" value="UniProtKB-SubCell"/>
</dbReference>
<dbReference type="GO" id="GO:0005507">
    <property type="term" value="F:copper ion binding"/>
    <property type="evidence" value="ECO:0007669"/>
    <property type="project" value="InterPro"/>
</dbReference>
<dbReference type="GO" id="GO:0004784">
    <property type="term" value="F:superoxide dismutase activity"/>
    <property type="evidence" value="ECO:0007669"/>
    <property type="project" value="UniProtKB-EC"/>
</dbReference>
<dbReference type="CDD" id="cd00305">
    <property type="entry name" value="Cu-Zn_Superoxide_Dismutase"/>
    <property type="match status" value="1"/>
</dbReference>
<dbReference type="FunFam" id="2.60.40.200:FF:000001">
    <property type="entry name" value="Superoxide dismutase [Cu-Zn]"/>
    <property type="match status" value="1"/>
</dbReference>
<dbReference type="Gene3D" id="2.60.40.200">
    <property type="entry name" value="Superoxide dismutase, copper/zinc binding domain"/>
    <property type="match status" value="1"/>
</dbReference>
<dbReference type="InterPro" id="IPR036423">
    <property type="entry name" value="SOD-like_Cu/Zn_dom_sf"/>
</dbReference>
<dbReference type="InterPro" id="IPR024134">
    <property type="entry name" value="SOD_Cu/Zn_/chaperone"/>
</dbReference>
<dbReference type="InterPro" id="IPR018152">
    <property type="entry name" value="SOD_Cu/Zn_BS"/>
</dbReference>
<dbReference type="InterPro" id="IPR001424">
    <property type="entry name" value="SOD_Cu_Zn_dom"/>
</dbReference>
<dbReference type="PANTHER" id="PTHR10003">
    <property type="entry name" value="SUPEROXIDE DISMUTASE CU-ZN -RELATED"/>
    <property type="match status" value="1"/>
</dbReference>
<dbReference type="Pfam" id="PF00080">
    <property type="entry name" value="Sod_Cu"/>
    <property type="match status" value="1"/>
</dbReference>
<dbReference type="PRINTS" id="PR00068">
    <property type="entry name" value="CUZNDISMTASE"/>
</dbReference>
<dbReference type="SUPFAM" id="SSF49329">
    <property type="entry name" value="Cu,Zn superoxide dismutase-like"/>
    <property type="match status" value="1"/>
</dbReference>
<dbReference type="PROSITE" id="PS00087">
    <property type="entry name" value="SOD_CU_ZN_1"/>
    <property type="match status" value="1"/>
</dbReference>
<dbReference type="PROSITE" id="PS00332">
    <property type="entry name" value="SOD_CU_ZN_2"/>
    <property type="match status" value="1"/>
</dbReference>
<organism>
    <name type="scientific">Mesembryanthemum crystallinum</name>
    <name type="common">Common ice plant</name>
    <name type="synonym">Cryophytum crystallinum</name>
    <dbReference type="NCBI Taxonomy" id="3544"/>
    <lineage>
        <taxon>Eukaryota</taxon>
        <taxon>Viridiplantae</taxon>
        <taxon>Streptophyta</taxon>
        <taxon>Embryophyta</taxon>
        <taxon>Tracheophyta</taxon>
        <taxon>Spermatophyta</taxon>
        <taxon>Magnoliopsida</taxon>
        <taxon>eudicotyledons</taxon>
        <taxon>Gunneridae</taxon>
        <taxon>Pentapetalae</taxon>
        <taxon>Caryophyllales</taxon>
        <taxon>Aizoaceae</taxon>
        <taxon>Mesembryanthemum</taxon>
        <taxon>Mesembryanthemum subgen. Cryophytum</taxon>
    </lineage>
</organism>
<sequence length="156" mass="16050">MGVIKAVAVINGNNNVKGSLQFIQDSTGVTHVKGRITGLTPGLHGFHIHALGDTTNGCNSTGPHFNPLKKDHGAPFDTERHAGDLGNVVAGADGVAEVSVRDTQIPLSGQHSILGRAVVVHADQDDLGRTGHELSKTTGNAGARVRCGIIGLQASV</sequence>
<protein>
    <recommendedName>
        <fullName>Superoxide dismutase [Cu-Zn] 2</fullName>
        <ecNumber>1.15.1.1</ecNumber>
    </recommendedName>
</protein>
<evidence type="ECO:0000250" key="1"/>
<evidence type="ECO:0000305" key="2"/>
<reference key="1">
    <citation type="online journal article" date="1998" name="Plant Gene Register">
        <title>Isolation of a full-length cDNA clone encoding a cytosolic Cu/Zn superoxide dismutase from the common ice plant, Mesembryanthemum crystallinum L.</title>
        <authorList>
            <person name="Emig I."/>
            <person name="Owens K."/>
            <person name="Ratajczak R."/>
            <person name="Luettge U."/>
            <person name="Cushman J.C."/>
        </authorList>
        <locator>PGR98-020</locator>
    </citation>
    <scope>NUCLEOTIDE SEQUENCE [MRNA]</scope>
</reference>
<accession>O49044</accession>
<comment type="function">
    <text>Destroys radicals which are normally produced within the cells and which are toxic to biological systems.</text>
</comment>
<comment type="catalytic activity">
    <reaction>
        <text>2 superoxide + 2 H(+) = H2O2 + O2</text>
        <dbReference type="Rhea" id="RHEA:20696"/>
        <dbReference type="ChEBI" id="CHEBI:15378"/>
        <dbReference type="ChEBI" id="CHEBI:15379"/>
        <dbReference type="ChEBI" id="CHEBI:16240"/>
        <dbReference type="ChEBI" id="CHEBI:18421"/>
        <dbReference type="EC" id="1.15.1.1"/>
    </reaction>
</comment>
<comment type="cofactor">
    <cofactor evidence="1">
        <name>Cu cation</name>
        <dbReference type="ChEBI" id="CHEBI:23378"/>
    </cofactor>
    <text evidence="1">Binds 1 copper ion per subunit.</text>
</comment>
<comment type="cofactor">
    <cofactor evidence="1">
        <name>Zn(2+)</name>
        <dbReference type="ChEBI" id="CHEBI:29105"/>
    </cofactor>
    <text evidence="1">Binds 1 zinc ion per subunit.</text>
</comment>
<comment type="subunit">
    <text evidence="1">Homodimer.</text>
</comment>
<comment type="subcellular location">
    <subcellularLocation>
        <location>Cytoplasm</location>
    </subcellularLocation>
</comment>
<comment type="similarity">
    <text evidence="2">Belongs to the Cu-Zn superoxide dismutase family.</text>
</comment>
<gene>
    <name type="primary">SODCC.2</name>
    <name type="synonym">SOD2</name>
</gene>